<organism>
    <name type="scientific">Prochlorococcus marinus (strain MIT 9215)</name>
    <dbReference type="NCBI Taxonomy" id="93060"/>
    <lineage>
        <taxon>Bacteria</taxon>
        <taxon>Bacillati</taxon>
        <taxon>Cyanobacteriota</taxon>
        <taxon>Cyanophyceae</taxon>
        <taxon>Synechococcales</taxon>
        <taxon>Prochlorococcaceae</taxon>
        <taxon>Prochlorococcus</taxon>
    </lineage>
</organism>
<name>RNPA_PROM2</name>
<evidence type="ECO:0000255" key="1">
    <source>
        <dbReference type="HAMAP-Rule" id="MF_00227"/>
    </source>
</evidence>
<comment type="function">
    <text evidence="1">RNaseP catalyzes the removal of the 5'-leader sequence from pre-tRNA to produce the mature 5'-terminus. It can also cleave other RNA substrates such as 4.5S RNA. The protein component plays an auxiliary but essential role in vivo by binding to the 5'-leader sequence and broadening the substrate specificity of the ribozyme.</text>
</comment>
<comment type="catalytic activity">
    <reaction evidence="1">
        <text>Endonucleolytic cleavage of RNA, removing 5'-extranucleotides from tRNA precursor.</text>
        <dbReference type="EC" id="3.1.26.5"/>
    </reaction>
</comment>
<comment type="subunit">
    <text evidence="1">Consists of a catalytic RNA component (M1 or rnpB) and a protein subunit.</text>
</comment>
<comment type="similarity">
    <text evidence="1">Belongs to the RnpA family.</text>
</comment>
<accession>A8G5Y2</accession>
<dbReference type="EC" id="3.1.26.5" evidence="1"/>
<dbReference type="EMBL" id="CP000825">
    <property type="protein sequence ID" value="ABV51013.1"/>
    <property type="molecule type" value="Genomic_DNA"/>
</dbReference>
<dbReference type="RefSeq" id="WP_002806869.1">
    <property type="nucleotide sequence ID" value="NC_009840.1"/>
</dbReference>
<dbReference type="SMR" id="A8G5Y2"/>
<dbReference type="STRING" id="93060.P9215_13981"/>
<dbReference type="KEGG" id="pmh:P9215_13981"/>
<dbReference type="eggNOG" id="COG0594">
    <property type="taxonomic scope" value="Bacteria"/>
</dbReference>
<dbReference type="HOGENOM" id="CLU_117179_2_0_3"/>
<dbReference type="OrthoDB" id="540358at2"/>
<dbReference type="Proteomes" id="UP000002014">
    <property type="component" value="Chromosome"/>
</dbReference>
<dbReference type="GO" id="GO:0030677">
    <property type="term" value="C:ribonuclease P complex"/>
    <property type="evidence" value="ECO:0007669"/>
    <property type="project" value="TreeGrafter"/>
</dbReference>
<dbReference type="GO" id="GO:0042781">
    <property type="term" value="F:3'-tRNA processing endoribonuclease activity"/>
    <property type="evidence" value="ECO:0007669"/>
    <property type="project" value="TreeGrafter"/>
</dbReference>
<dbReference type="GO" id="GO:0004526">
    <property type="term" value="F:ribonuclease P activity"/>
    <property type="evidence" value="ECO:0007669"/>
    <property type="project" value="UniProtKB-UniRule"/>
</dbReference>
<dbReference type="GO" id="GO:0000049">
    <property type="term" value="F:tRNA binding"/>
    <property type="evidence" value="ECO:0007669"/>
    <property type="project" value="UniProtKB-UniRule"/>
</dbReference>
<dbReference type="GO" id="GO:0001682">
    <property type="term" value="P:tRNA 5'-leader removal"/>
    <property type="evidence" value="ECO:0007669"/>
    <property type="project" value="UniProtKB-UniRule"/>
</dbReference>
<dbReference type="Gene3D" id="3.30.230.10">
    <property type="match status" value="1"/>
</dbReference>
<dbReference type="HAMAP" id="MF_00227">
    <property type="entry name" value="RNase_P"/>
    <property type="match status" value="1"/>
</dbReference>
<dbReference type="InterPro" id="IPR020568">
    <property type="entry name" value="Ribosomal_Su5_D2-typ_SF"/>
</dbReference>
<dbReference type="InterPro" id="IPR014721">
    <property type="entry name" value="Ribsml_uS5_D2-typ_fold_subgr"/>
</dbReference>
<dbReference type="InterPro" id="IPR000100">
    <property type="entry name" value="RNase_P"/>
</dbReference>
<dbReference type="PANTHER" id="PTHR33992">
    <property type="entry name" value="RIBONUCLEASE P PROTEIN COMPONENT"/>
    <property type="match status" value="1"/>
</dbReference>
<dbReference type="PANTHER" id="PTHR33992:SF1">
    <property type="entry name" value="RIBONUCLEASE P PROTEIN COMPONENT"/>
    <property type="match status" value="1"/>
</dbReference>
<dbReference type="Pfam" id="PF00825">
    <property type="entry name" value="Ribonuclease_P"/>
    <property type="match status" value="1"/>
</dbReference>
<dbReference type="SUPFAM" id="SSF54211">
    <property type="entry name" value="Ribosomal protein S5 domain 2-like"/>
    <property type="match status" value="1"/>
</dbReference>
<gene>
    <name evidence="1" type="primary">rnpA</name>
    <name type="ordered locus">P9215_13981</name>
</gene>
<reference key="1">
    <citation type="journal article" date="2007" name="PLoS Genet.">
        <title>Patterns and implications of gene gain and loss in the evolution of Prochlorococcus.</title>
        <authorList>
            <person name="Kettler G.C."/>
            <person name="Martiny A.C."/>
            <person name="Huang K."/>
            <person name="Zucker J."/>
            <person name="Coleman M.L."/>
            <person name="Rodrigue S."/>
            <person name="Chen F."/>
            <person name="Lapidus A."/>
            <person name="Ferriera S."/>
            <person name="Johnson J."/>
            <person name="Steglich C."/>
            <person name="Church G.M."/>
            <person name="Richardson P."/>
            <person name="Chisholm S.W."/>
        </authorList>
    </citation>
    <scope>NUCLEOTIDE SEQUENCE [LARGE SCALE GENOMIC DNA]</scope>
    <source>
        <strain>MIT 9215</strain>
    </source>
</reference>
<sequence>MALPKDMRLKGHRTFNYIHKNSTIYHGKLMTFKVARSNPEILFTHKLTNNSNKFRMAIAISKKVSKKAVERNKLRRILQEWLLTNIKKINNHKPYWLLVNLKFGDFCNDKSRLLEEFQNLMFKSHLIK</sequence>
<protein>
    <recommendedName>
        <fullName evidence="1">Ribonuclease P protein component</fullName>
        <shortName evidence="1">RNase P protein</shortName>
        <shortName evidence="1">RNaseP protein</shortName>
        <ecNumber evidence="1">3.1.26.5</ecNumber>
    </recommendedName>
    <alternativeName>
        <fullName evidence="1">Protein C5</fullName>
    </alternativeName>
</protein>
<proteinExistence type="inferred from homology"/>
<feature type="chain" id="PRO_1000194658" description="Ribonuclease P protein component">
    <location>
        <begin position="1"/>
        <end position="128"/>
    </location>
</feature>
<keyword id="KW-0255">Endonuclease</keyword>
<keyword id="KW-0378">Hydrolase</keyword>
<keyword id="KW-0540">Nuclease</keyword>
<keyword id="KW-0694">RNA-binding</keyword>
<keyword id="KW-0819">tRNA processing</keyword>